<gene>
    <name evidence="1" type="primary">lacZ</name>
    <name type="synonym">bga</name>
</gene>
<accession>Q2XQU3</accession>
<sequence length="1029" mass="116816">MPNTLSLTLSAILARRDWENPGVTQWNRLEAHAPLHSWRLEQPALDDAASASRRSLNGVWRFNYFPAPEQIPEAWVTEDCADAVPMPVPSNWQMQGFDTPIYTNVTYPIPVNPPFVPQENPTGCYSLTFDVDDAWLQSGQTRIIFDGVNSAFHLWCNGRWMGYSQDSRLPAEFNLSTVLRPGENRLAVMVLRWCDGSYLEDQDMWRMSGIFRDVTLLHKPETQIADYRVVTDLNAELDRAVLKADVALAGAGFADCEVVFTLWRKGEKCASVSRRPGSAVVDERGSWDERLTVAIPIDRPALWSAETPELYRLTMALLGPQGEVLEVEACDVGFRRVDISNGLLKLNGKPLLIRGVNRLEHHPENGQVMDEATMRRDIEIMKQHNFNAVRCSHYPNHPLWYRLCDRYGLYVVDEANIETHGMVPMSRLADDPRWLPAMSERVTRMVQRDRNHPSIIIWSLGNESGHGANHDALYRWLKTTDPTRPVQYEGGGANTAATDIVCPMYARVDWDQPFPAVPKWSIKKWIGMPDETRPLILCEYAHAMGNSFGGFAKYWQAFRSHPRLQGGFVWDWVDQALTKKDEKGNAFWAYGGDFGDTPNDRQFCLNGLVFPDRTPHPALYEAQRAQQFFTFTLVSTSPLMIEVQSGYLFRPTDNEVLSWTVARDGKVLASGEVTLAIAPEGVQRLEIALPELKAGPGEIWLNVEVRQPRATPWSPAGHRCAWEQWPLPAPLFIAPPASTGEPPVLTQNDRILEVTHRQQRWQFDRASGYLTQWWRNGVETLLSPVTDNVSRAPLDNDIGVSEATRIDPNAWVERWKAAGMYDLTSRMLHCEAEQHAREVVVTTLNVLEHRGRALFLSRKIWRLDEQGVLHGDIQVDIASDIPKPARIGLSVHLAETPEKVDWLGLGPHENYPDRKLAAQQGRWTLPLADMHTPYIFPTENGLRCDTRKLVLGAHQLNGAFHFSVGRYSQQQLRETTHHHLLREEPGGWLNLDAFHMGVGGDDSWSPSVSPEFILQTRQLRYTFSWQQNP</sequence>
<evidence type="ECO:0000255" key="1">
    <source>
        <dbReference type="HAMAP-Rule" id="MF_01687"/>
    </source>
</evidence>
<name>BGAL2_ENTCL</name>
<proteinExistence type="inferred from homology"/>
<reference key="1">
    <citation type="submission" date="2005-10" db="EMBL/GenBank/DDBJ databases">
        <title>Purification, characterization, and molecular cloning of a beta-galactosidase with transglycosylation activity from Enterobacter cloacae.</title>
        <authorList>
            <person name="Lu L.L."/>
            <person name="Xiao M."/>
        </authorList>
    </citation>
    <scope>NUCLEOTIDE SEQUENCE [GENOMIC DNA]</scope>
    <source>
        <strain>B5</strain>
    </source>
</reference>
<dbReference type="EC" id="3.2.1.23" evidence="1"/>
<dbReference type="EMBL" id="DQ266449">
    <property type="protein sequence ID" value="ABB73039.1"/>
    <property type="molecule type" value="Genomic_DNA"/>
</dbReference>
<dbReference type="SMR" id="Q2XQU3"/>
<dbReference type="CAZy" id="GH2">
    <property type="family name" value="Glycoside Hydrolase Family 2"/>
</dbReference>
<dbReference type="GO" id="GO:0009341">
    <property type="term" value="C:beta-galactosidase complex"/>
    <property type="evidence" value="ECO:0007669"/>
    <property type="project" value="InterPro"/>
</dbReference>
<dbReference type="GO" id="GO:0004565">
    <property type="term" value="F:beta-galactosidase activity"/>
    <property type="evidence" value="ECO:0007669"/>
    <property type="project" value="UniProtKB-EC"/>
</dbReference>
<dbReference type="GO" id="GO:0030246">
    <property type="term" value="F:carbohydrate binding"/>
    <property type="evidence" value="ECO:0007669"/>
    <property type="project" value="InterPro"/>
</dbReference>
<dbReference type="GO" id="GO:0000287">
    <property type="term" value="F:magnesium ion binding"/>
    <property type="evidence" value="ECO:0007669"/>
    <property type="project" value="UniProtKB-UniRule"/>
</dbReference>
<dbReference type="GO" id="GO:0005990">
    <property type="term" value="P:lactose catabolic process"/>
    <property type="evidence" value="ECO:0007669"/>
    <property type="project" value="TreeGrafter"/>
</dbReference>
<dbReference type="FunFam" id="2.60.40.10:FF:000680">
    <property type="entry name" value="Beta-galactosidase"/>
    <property type="match status" value="1"/>
</dbReference>
<dbReference type="FunFam" id="3.20.20.80:FF:000018">
    <property type="entry name" value="Beta-galactosidase"/>
    <property type="match status" value="1"/>
</dbReference>
<dbReference type="Gene3D" id="2.70.98.10">
    <property type="match status" value="1"/>
</dbReference>
<dbReference type="Gene3D" id="2.60.120.260">
    <property type="entry name" value="Galactose-binding domain-like"/>
    <property type="match status" value="1"/>
</dbReference>
<dbReference type="Gene3D" id="3.20.20.80">
    <property type="entry name" value="Glycosidases"/>
    <property type="match status" value="1"/>
</dbReference>
<dbReference type="Gene3D" id="2.60.40.10">
    <property type="entry name" value="Immunoglobulins"/>
    <property type="match status" value="2"/>
</dbReference>
<dbReference type="HAMAP" id="MF_01687">
    <property type="entry name" value="Beta_gal"/>
    <property type="match status" value="1"/>
</dbReference>
<dbReference type="InterPro" id="IPR004199">
    <property type="entry name" value="B-gal_small/dom_5"/>
</dbReference>
<dbReference type="InterPro" id="IPR050347">
    <property type="entry name" value="Bact_Beta-galactosidase"/>
</dbReference>
<dbReference type="InterPro" id="IPR036156">
    <property type="entry name" value="Beta-gal/glucu_dom_sf"/>
</dbReference>
<dbReference type="InterPro" id="IPR011013">
    <property type="entry name" value="Gal_mutarotase_sf_dom"/>
</dbReference>
<dbReference type="InterPro" id="IPR008979">
    <property type="entry name" value="Galactose-bd-like_sf"/>
</dbReference>
<dbReference type="InterPro" id="IPR014718">
    <property type="entry name" value="GH-type_carb-bd"/>
</dbReference>
<dbReference type="InterPro" id="IPR006101">
    <property type="entry name" value="Glyco_hydro_2"/>
</dbReference>
<dbReference type="InterPro" id="IPR023232">
    <property type="entry name" value="Glyco_hydro_2_AS"/>
</dbReference>
<dbReference type="InterPro" id="IPR023933">
    <property type="entry name" value="Glyco_hydro_2_beta_Galsidase"/>
</dbReference>
<dbReference type="InterPro" id="IPR006103">
    <property type="entry name" value="Glyco_hydro_2_cat"/>
</dbReference>
<dbReference type="InterPro" id="IPR023230">
    <property type="entry name" value="Glyco_hydro_2_CS"/>
</dbReference>
<dbReference type="InterPro" id="IPR006102">
    <property type="entry name" value="Glyco_hydro_2_Ig-like"/>
</dbReference>
<dbReference type="InterPro" id="IPR006104">
    <property type="entry name" value="Glyco_hydro_2_N"/>
</dbReference>
<dbReference type="InterPro" id="IPR017853">
    <property type="entry name" value="Glycoside_hydrolase_SF"/>
</dbReference>
<dbReference type="InterPro" id="IPR013783">
    <property type="entry name" value="Ig-like_fold"/>
</dbReference>
<dbReference type="InterPro" id="IPR032312">
    <property type="entry name" value="LacZ_4"/>
</dbReference>
<dbReference type="NCBIfam" id="NF007074">
    <property type="entry name" value="PRK09525.1"/>
    <property type="match status" value="1"/>
</dbReference>
<dbReference type="PANTHER" id="PTHR46323">
    <property type="entry name" value="BETA-GALACTOSIDASE"/>
    <property type="match status" value="1"/>
</dbReference>
<dbReference type="PANTHER" id="PTHR46323:SF2">
    <property type="entry name" value="BETA-GALACTOSIDASE"/>
    <property type="match status" value="1"/>
</dbReference>
<dbReference type="Pfam" id="PF02929">
    <property type="entry name" value="Bgal_small_N"/>
    <property type="match status" value="1"/>
</dbReference>
<dbReference type="Pfam" id="PF00703">
    <property type="entry name" value="Glyco_hydro_2"/>
    <property type="match status" value="1"/>
</dbReference>
<dbReference type="Pfam" id="PF02836">
    <property type="entry name" value="Glyco_hydro_2_C"/>
    <property type="match status" value="1"/>
</dbReference>
<dbReference type="Pfam" id="PF02837">
    <property type="entry name" value="Glyco_hydro_2_N"/>
    <property type="match status" value="1"/>
</dbReference>
<dbReference type="Pfam" id="PF16353">
    <property type="entry name" value="LacZ_4"/>
    <property type="match status" value="1"/>
</dbReference>
<dbReference type="PRINTS" id="PR00132">
    <property type="entry name" value="GLHYDRLASE2"/>
</dbReference>
<dbReference type="SMART" id="SM01038">
    <property type="entry name" value="Bgal_small_N"/>
    <property type="match status" value="1"/>
</dbReference>
<dbReference type="SUPFAM" id="SSF51445">
    <property type="entry name" value="(Trans)glycosidases"/>
    <property type="match status" value="1"/>
</dbReference>
<dbReference type="SUPFAM" id="SSF49303">
    <property type="entry name" value="beta-Galactosidase/glucuronidase domain"/>
    <property type="match status" value="2"/>
</dbReference>
<dbReference type="SUPFAM" id="SSF74650">
    <property type="entry name" value="Galactose mutarotase-like"/>
    <property type="match status" value="1"/>
</dbReference>
<dbReference type="SUPFAM" id="SSF49785">
    <property type="entry name" value="Galactose-binding domain-like"/>
    <property type="match status" value="1"/>
</dbReference>
<dbReference type="PROSITE" id="PS00719">
    <property type="entry name" value="GLYCOSYL_HYDROL_F2_1"/>
    <property type="match status" value="1"/>
</dbReference>
<dbReference type="PROSITE" id="PS00608">
    <property type="entry name" value="GLYCOSYL_HYDROL_F2_2"/>
    <property type="match status" value="1"/>
</dbReference>
<comment type="catalytic activity">
    <reaction evidence="1">
        <text>Hydrolysis of terminal non-reducing beta-D-galactose residues in beta-D-galactosides.</text>
        <dbReference type="EC" id="3.2.1.23"/>
    </reaction>
</comment>
<comment type="cofactor">
    <cofactor evidence="1">
        <name>Mg(2+)</name>
        <dbReference type="ChEBI" id="CHEBI:18420"/>
    </cofactor>
    <text evidence="1">Binds 2 magnesium ions per monomer.</text>
</comment>
<comment type="cofactor">
    <cofactor evidence="1">
        <name>Na(+)</name>
        <dbReference type="ChEBI" id="CHEBI:29101"/>
    </cofactor>
    <text evidence="1">Binds 1 sodium ion per monomer.</text>
</comment>
<comment type="subunit">
    <text evidence="1">Homotetramer.</text>
</comment>
<comment type="similarity">
    <text evidence="1">Belongs to the glycosyl hydrolase 2 family.</text>
</comment>
<feature type="chain" id="PRO_0000366983" description="Beta-galactosidase 2">
    <location>
        <begin position="1"/>
        <end position="1029"/>
    </location>
</feature>
<feature type="active site" description="Proton donor" evidence="1">
    <location>
        <position position="463"/>
    </location>
</feature>
<feature type="active site" description="Nucleophile" evidence="1">
    <location>
        <position position="539"/>
    </location>
</feature>
<feature type="binding site" evidence="1">
    <location>
        <position position="104"/>
    </location>
    <ligand>
        <name>substrate</name>
    </ligand>
</feature>
<feature type="binding site" evidence="1">
    <location>
        <position position="203"/>
    </location>
    <ligand>
        <name>Na(+)</name>
        <dbReference type="ChEBI" id="CHEBI:29101"/>
    </ligand>
</feature>
<feature type="binding site" evidence="1">
    <location>
        <position position="203"/>
    </location>
    <ligand>
        <name>substrate</name>
    </ligand>
</feature>
<feature type="binding site" evidence="1">
    <location>
        <position position="418"/>
    </location>
    <ligand>
        <name>Mg(2+)</name>
        <dbReference type="ChEBI" id="CHEBI:18420"/>
        <label>1</label>
    </ligand>
</feature>
<feature type="binding site" evidence="1">
    <location>
        <position position="420"/>
    </location>
    <ligand>
        <name>Mg(2+)</name>
        <dbReference type="ChEBI" id="CHEBI:18420"/>
        <label>1</label>
    </ligand>
</feature>
<feature type="binding site" evidence="1">
    <location>
        <position position="463"/>
    </location>
    <ligand>
        <name>Mg(2+)</name>
        <dbReference type="ChEBI" id="CHEBI:18420"/>
        <label>1</label>
    </ligand>
</feature>
<feature type="binding site" evidence="1">
    <location>
        <position position="463"/>
    </location>
    <ligand>
        <name>substrate</name>
    </ligand>
</feature>
<feature type="binding site" evidence="1">
    <location>
        <begin position="539"/>
        <end position="542"/>
    </location>
    <ligand>
        <name>substrate</name>
    </ligand>
</feature>
<feature type="binding site" evidence="1">
    <location>
        <position position="599"/>
    </location>
    <ligand>
        <name>Mg(2+)</name>
        <dbReference type="ChEBI" id="CHEBI:18420"/>
        <label>2</label>
    </ligand>
</feature>
<feature type="binding site" evidence="1">
    <location>
        <position position="603"/>
    </location>
    <ligand>
        <name>Na(+)</name>
        <dbReference type="ChEBI" id="CHEBI:29101"/>
    </ligand>
</feature>
<feature type="binding site" evidence="1">
    <location>
        <position position="606"/>
    </location>
    <ligand>
        <name>Na(+)</name>
        <dbReference type="ChEBI" id="CHEBI:29101"/>
    </ligand>
</feature>
<feature type="binding site" evidence="1">
    <location>
        <position position="606"/>
    </location>
    <ligand>
        <name>substrate</name>
    </ligand>
</feature>
<feature type="binding site" evidence="1">
    <location>
        <position position="1004"/>
    </location>
    <ligand>
        <name>substrate</name>
    </ligand>
</feature>
<feature type="site" description="Transition state stabilizer" evidence="1">
    <location>
        <position position="393"/>
    </location>
</feature>
<protein>
    <recommendedName>
        <fullName evidence="1">Beta-galactosidase 2</fullName>
        <shortName evidence="1">Beta-gal</shortName>
        <ecNumber evidence="1">3.2.1.23</ecNumber>
    </recommendedName>
    <alternativeName>
        <fullName evidence="1">Lactase</fullName>
    </alternativeName>
</protein>
<organism>
    <name type="scientific">Enterobacter cloacae</name>
    <dbReference type="NCBI Taxonomy" id="550"/>
    <lineage>
        <taxon>Bacteria</taxon>
        <taxon>Pseudomonadati</taxon>
        <taxon>Pseudomonadota</taxon>
        <taxon>Gammaproteobacteria</taxon>
        <taxon>Enterobacterales</taxon>
        <taxon>Enterobacteriaceae</taxon>
        <taxon>Enterobacter</taxon>
        <taxon>Enterobacter cloacae complex</taxon>
    </lineage>
</organism>
<keyword id="KW-0326">Glycosidase</keyword>
<keyword id="KW-0378">Hydrolase</keyword>
<keyword id="KW-0460">Magnesium</keyword>
<keyword id="KW-0479">Metal-binding</keyword>
<keyword id="KW-0915">Sodium</keyword>